<feature type="chain" id="PRO_1000069201" description="UPF0397 protein SAHV_2669">
    <location>
        <begin position="1"/>
        <end position="184"/>
    </location>
</feature>
<feature type="transmembrane region" description="Helical" evidence="1">
    <location>
        <begin position="11"/>
        <end position="31"/>
    </location>
</feature>
<feature type="transmembrane region" description="Helical" evidence="1">
    <location>
        <begin position="44"/>
        <end position="64"/>
    </location>
</feature>
<feature type="transmembrane region" description="Helical" evidence="1">
    <location>
        <begin position="77"/>
        <end position="97"/>
    </location>
</feature>
<feature type="transmembrane region" description="Helical" evidence="1">
    <location>
        <begin position="111"/>
        <end position="131"/>
    </location>
</feature>
<feature type="transmembrane region" description="Helical" evidence="1">
    <location>
        <begin position="148"/>
        <end position="168"/>
    </location>
</feature>
<comment type="subcellular location">
    <subcellularLocation>
        <location evidence="1">Cell membrane</location>
        <topology evidence="1">Multi-pass membrane protein</topology>
    </subcellularLocation>
</comment>
<comment type="similarity">
    <text evidence="1">Belongs to the UPF0397 family.</text>
</comment>
<accession>A7X777</accession>
<evidence type="ECO:0000255" key="1">
    <source>
        <dbReference type="HAMAP-Rule" id="MF_01572"/>
    </source>
</evidence>
<gene>
    <name type="ordered locus">SAHV_2669</name>
</gene>
<name>Y2669_STAA1</name>
<proteinExistence type="inferred from homology"/>
<reference key="1">
    <citation type="journal article" date="2008" name="Antimicrob. Agents Chemother.">
        <title>Mutated response regulator graR is responsible for phenotypic conversion of Staphylococcus aureus from heterogeneous vancomycin-intermediate resistance to vancomycin-intermediate resistance.</title>
        <authorList>
            <person name="Neoh H.-M."/>
            <person name="Cui L."/>
            <person name="Yuzawa H."/>
            <person name="Takeuchi F."/>
            <person name="Matsuo M."/>
            <person name="Hiramatsu K."/>
        </authorList>
    </citation>
    <scope>NUCLEOTIDE SEQUENCE [LARGE SCALE GENOMIC DNA]</scope>
    <source>
        <strain>Mu3 / ATCC 700698</strain>
    </source>
</reference>
<protein>
    <recommendedName>
        <fullName evidence="1">UPF0397 protein SAHV_2669</fullName>
    </recommendedName>
</protein>
<sequence length="184" mass="19811">MKKQDISVKTVVAIGIGAAVFVILGRFVVIPTGFPNTNIETSYAFLALISAIFGPFAGLMTGLVGHAIKDFTTYGSAWWSWVICSGIIGCLYGWIGLKLNLSSGLFSRKSMIYFNIGQIIANIICWALIAPTLDILIYNEPANKVYTQGVISAVLNIISVGIIGTILLKAYASSQIKKGSLRKE</sequence>
<organism>
    <name type="scientific">Staphylococcus aureus (strain Mu3 / ATCC 700698)</name>
    <dbReference type="NCBI Taxonomy" id="418127"/>
    <lineage>
        <taxon>Bacteria</taxon>
        <taxon>Bacillati</taxon>
        <taxon>Bacillota</taxon>
        <taxon>Bacilli</taxon>
        <taxon>Bacillales</taxon>
        <taxon>Staphylococcaceae</taxon>
        <taxon>Staphylococcus</taxon>
    </lineage>
</organism>
<keyword id="KW-1003">Cell membrane</keyword>
<keyword id="KW-0472">Membrane</keyword>
<keyword id="KW-0812">Transmembrane</keyword>
<keyword id="KW-1133">Transmembrane helix</keyword>
<dbReference type="EMBL" id="AP009324">
    <property type="protein sequence ID" value="BAF79552.1"/>
    <property type="molecule type" value="Genomic_DNA"/>
</dbReference>
<dbReference type="RefSeq" id="WP_000743711.1">
    <property type="nucleotide sequence ID" value="NC_009782.1"/>
</dbReference>
<dbReference type="KEGG" id="saw:SAHV_2669"/>
<dbReference type="HOGENOM" id="CLU_120023_0_0_9"/>
<dbReference type="GO" id="GO:0005886">
    <property type="term" value="C:plasma membrane"/>
    <property type="evidence" value="ECO:0007669"/>
    <property type="project" value="UniProtKB-SubCell"/>
</dbReference>
<dbReference type="Gene3D" id="1.10.1760.20">
    <property type="match status" value="1"/>
</dbReference>
<dbReference type="HAMAP" id="MF_01572">
    <property type="entry name" value="UPF0397"/>
    <property type="match status" value="1"/>
</dbReference>
<dbReference type="InterPro" id="IPR009825">
    <property type="entry name" value="ECF_substrate-spec-like"/>
</dbReference>
<dbReference type="InterPro" id="IPR022914">
    <property type="entry name" value="UPF0397"/>
</dbReference>
<dbReference type="NCBIfam" id="NF010182">
    <property type="entry name" value="PRK13661.1"/>
    <property type="match status" value="1"/>
</dbReference>
<dbReference type="PANTHER" id="PTHR37815">
    <property type="entry name" value="UPF0397 PROTEIN BC_2624-RELATED"/>
    <property type="match status" value="1"/>
</dbReference>
<dbReference type="PANTHER" id="PTHR37815:SF3">
    <property type="entry name" value="UPF0397 PROTEIN SPR0429"/>
    <property type="match status" value="1"/>
</dbReference>
<dbReference type="Pfam" id="PF07155">
    <property type="entry name" value="ECF-ribofla_trS"/>
    <property type="match status" value="1"/>
</dbReference>